<gene>
    <name evidence="1" type="primary">deoC</name>
    <name type="ordered locus">ETA_06660</name>
</gene>
<accession>B2VH50</accession>
<evidence type="ECO:0000255" key="1">
    <source>
        <dbReference type="HAMAP-Rule" id="MF_00592"/>
    </source>
</evidence>
<sequence length="259" mass="27594">MSEVKDRALRALQLMDLTTLNDDDTDAKVIALCHQAKSPAGNTAAICIYPRFIPLARKTLREQGTPEIRIATVTNFPHGNDDSEIALAETRAAIAYGADEVDVVFPYRALMAGNEAIGFELVKACKQACREANVLLKVIIESGELKEASLIRKASEIAIDAGADFIKTSTGKVAVNATPEVAEIMLRTIAAKGVQKQVGFKPAGGVRSADDAALYLKLADNILGPDWADARHFRFGASSLLASLLNAAGFNGATSDSNY</sequence>
<keyword id="KW-0963">Cytoplasm</keyword>
<keyword id="KW-0456">Lyase</keyword>
<keyword id="KW-1185">Reference proteome</keyword>
<keyword id="KW-0704">Schiff base</keyword>
<organism>
    <name type="scientific">Erwinia tasmaniensis (strain DSM 17950 / CFBP 7177 / CIP 109463 / NCPPB 4357 / Et1/99)</name>
    <dbReference type="NCBI Taxonomy" id="465817"/>
    <lineage>
        <taxon>Bacteria</taxon>
        <taxon>Pseudomonadati</taxon>
        <taxon>Pseudomonadota</taxon>
        <taxon>Gammaproteobacteria</taxon>
        <taxon>Enterobacterales</taxon>
        <taxon>Erwiniaceae</taxon>
        <taxon>Erwinia</taxon>
    </lineage>
</organism>
<reference key="1">
    <citation type="journal article" date="2008" name="Environ. Microbiol.">
        <title>The genome of Erwinia tasmaniensis strain Et1/99, a non-pathogenic bacterium in the genus Erwinia.</title>
        <authorList>
            <person name="Kube M."/>
            <person name="Migdoll A.M."/>
            <person name="Mueller I."/>
            <person name="Kuhl H."/>
            <person name="Beck A."/>
            <person name="Reinhardt R."/>
            <person name="Geider K."/>
        </authorList>
    </citation>
    <scope>NUCLEOTIDE SEQUENCE [LARGE SCALE GENOMIC DNA]</scope>
    <source>
        <strain>DSM 17950 / CFBP 7177 / CIP 109463 / NCPPB 4357 / Et1/99</strain>
    </source>
</reference>
<protein>
    <recommendedName>
        <fullName evidence="1">Deoxyribose-phosphate aldolase</fullName>
        <shortName evidence="1">DERA</shortName>
        <ecNumber evidence="1">4.1.2.4</ecNumber>
    </recommendedName>
    <alternativeName>
        <fullName evidence="1">2-deoxy-D-ribose 5-phosphate aldolase</fullName>
    </alternativeName>
    <alternativeName>
        <fullName evidence="1">Phosphodeoxyriboaldolase</fullName>
        <shortName evidence="1">Deoxyriboaldolase</shortName>
    </alternativeName>
</protein>
<dbReference type="EC" id="4.1.2.4" evidence="1"/>
<dbReference type="EMBL" id="CU468135">
    <property type="protein sequence ID" value="CAO95712.1"/>
    <property type="molecule type" value="Genomic_DNA"/>
</dbReference>
<dbReference type="RefSeq" id="WP_012440414.1">
    <property type="nucleotide sequence ID" value="NC_010694.1"/>
</dbReference>
<dbReference type="SMR" id="B2VH50"/>
<dbReference type="STRING" id="465817.ETA_06660"/>
<dbReference type="KEGG" id="eta:ETA_06660"/>
<dbReference type="eggNOG" id="COG0274">
    <property type="taxonomic scope" value="Bacteria"/>
</dbReference>
<dbReference type="HOGENOM" id="CLU_053595_3_1_6"/>
<dbReference type="OrthoDB" id="6579831at2"/>
<dbReference type="UniPathway" id="UPA00002">
    <property type="reaction ID" value="UER00468"/>
</dbReference>
<dbReference type="Proteomes" id="UP000001726">
    <property type="component" value="Chromosome"/>
</dbReference>
<dbReference type="GO" id="GO:0005737">
    <property type="term" value="C:cytoplasm"/>
    <property type="evidence" value="ECO:0007669"/>
    <property type="project" value="UniProtKB-SubCell"/>
</dbReference>
<dbReference type="GO" id="GO:0004139">
    <property type="term" value="F:deoxyribose-phosphate aldolase activity"/>
    <property type="evidence" value="ECO:0007669"/>
    <property type="project" value="UniProtKB-UniRule"/>
</dbReference>
<dbReference type="GO" id="GO:0006018">
    <property type="term" value="P:2-deoxyribose 1-phosphate catabolic process"/>
    <property type="evidence" value="ECO:0007669"/>
    <property type="project" value="UniProtKB-UniRule"/>
</dbReference>
<dbReference type="GO" id="GO:0016052">
    <property type="term" value="P:carbohydrate catabolic process"/>
    <property type="evidence" value="ECO:0007669"/>
    <property type="project" value="TreeGrafter"/>
</dbReference>
<dbReference type="GO" id="GO:0009264">
    <property type="term" value="P:deoxyribonucleotide catabolic process"/>
    <property type="evidence" value="ECO:0007669"/>
    <property type="project" value="InterPro"/>
</dbReference>
<dbReference type="CDD" id="cd00959">
    <property type="entry name" value="DeoC"/>
    <property type="match status" value="1"/>
</dbReference>
<dbReference type="FunFam" id="3.20.20.70:FF:000034">
    <property type="entry name" value="Deoxyribose-phosphate aldolase"/>
    <property type="match status" value="1"/>
</dbReference>
<dbReference type="Gene3D" id="3.20.20.70">
    <property type="entry name" value="Aldolase class I"/>
    <property type="match status" value="1"/>
</dbReference>
<dbReference type="HAMAP" id="MF_00592">
    <property type="entry name" value="DeoC_type2"/>
    <property type="match status" value="1"/>
</dbReference>
<dbReference type="InterPro" id="IPR013785">
    <property type="entry name" value="Aldolase_TIM"/>
</dbReference>
<dbReference type="InterPro" id="IPR011343">
    <property type="entry name" value="DeoC"/>
</dbReference>
<dbReference type="InterPro" id="IPR002915">
    <property type="entry name" value="DeoC/FbaB/LacD_aldolase"/>
</dbReference>
<dbReference type="InterPro" id="IPR023649">
    <property type="entry name" value="DeoC_typeII"/>
</dbReference>
<dbReference type="NCBIfam" id="TIGR00126">
    <property type="entry name" value="deoC"/>
    <property type="match status" value="1"/>
</dbReference>
<dbReference type="PANTHER" id="PTHR10889">
    <property type="entry name" value="DEOXYRIBOSE-PHOSPHATE ALDOLASE"/>
    <property type="match status" value="1"/>
</dbReference>
<dbReference type="PANTHER" id="PTHR10889:SF3">
    <property type="entry name" value="DEOXYRIBOSE-PHOSPHATE ALDOLASE"/>
    <property type="match status" value="1"/>
</dbReference>
<dbReference type="Pfam" id="PF01791">
    <property type="entry name" value="DeoC"/>
    <property type="match status" value="1"/>
</dbReference>
<dbReference type="PIRSF" id="PIRSF001357">
    <property type="entry name" value="DeoC"/>
    <property type="match status" value="1"/>
</dbReference>
<dbReference type="SMART" id="SM01133">
    <property type="entry name" value="DeoC"/>
    <property type="match status" value="1"/>
</dbReference>
<dbReference type="SUPFAM" id="SSF51569">
    <property type="entry name" value="Aldolase"/>
    <property type="match status" value="1"/>
</dbReference>
<name>DEOC_ERWT9</name>
<feature type="chain" id="PRO_1000129807" description="Deoxyribose-phosphate aldolase">
    <location>
        <begin position="1"/>
        <end position="259"/>
    </location>
</feature>
<feature type="active site" description="Proton donor/acceptor" evidence="1">
    <location>
        <position position="102"/>
    </location>
</feature>
<feature type="active site" description="Schiff-base intermediate with acetaldehyde" evidence="1">
    <location>
        <position position="167"/>
    </location>
</feature>
<feature type="active site" description="Proton donor/acceptor" evidence="1">
    <location>
        <position position="201"/>
    </location>
</feature>
<comment type="function">
    <text evidence="1">Catalyzes a reversible aldol reaction between acetaldehyde and D-glyceraldehyde 3-phosphate to generate 2-deoxy-D-ribose 5-phosphate.</text>
</comment>
<comment type="catalytic activity">
    <reaction evidence="1">
        <text>2-deoxy-D-ribose 5-phosphate = D-glyceraldehyde 3-phosphate + acetaldehyde</text>
        <dbReference type="Rhea" id="RHEA:12821"/>
        <dbReference type="ChEBI" id="CHEBI:15343"/>
        <dbReference type="ChEBI" id="CHEBI:59776"/>
        <dbReference type="ChEBI" id="CHEBI:62877"/>
        <dbReference type="EC" id="4.1.2.4"/>
    </reaction>
</comment>
<comment type="pathway">
    <text evidence="1">Carbohydrate degradation; 2-deoxy-D-ribose 1-phosphate degradation; D-glyceraldehyde 3-phosphate and acetaldehyde from 2-deoxy-alpha-D-ribose 1-phosphate: step 2/2.</text>
</comment>
<comment type="subcellular location">
    <subcellularLocation>
        <location evidence="1">Cytoplasm</location>
    </subcellularLocation>
</comment>
<comment type="similarity">
    <text evidence="1">Belongs to the DeoC/FbaB aldolase family. DeoC type 2 subfamily.</text>
</comment>
<proteinExistence type="inferred from homology"/>